<comment type="function">
    <text evidence="1">One of the primary rRNA binding proteins, it binds directly to 16S rRNA central domain where it helps coordinate assembly of the platform of the 30S subunit.</text>
</comment>
<comment type="subunit">
    <text evidence="1">Part of the 30S ribosomal subunit.</text>
</comment>
<comment type="similarity">
    <text evidence="1">Belongs to the universal ribosomal protein uS8 family.</text>
</comment>
<feature type="chain" id="PRO_0000290970" description="Small ribosomal subunit protein uS8">
    <location>
        <begin position="1"/>
        <end position="130"/>
    </location>
</feature>
<keyword id="KW-0687">Ribonucleoprotein</keyword>
<keyword id="KW-0689">Ribosomal protein</keyword>
<keyword id="KW-0694">RNA-binding</keyword>
<keyword id="KW-0699">rRNA-binding</keyword>
<proteinExistence type="inferred from homology"/>
<reference key="1">
    <citation type="submission" date="2006-12" db="EMBL/GenBank/DDBJ databases">
        <title>Complete sequence of Pyrobaculum islandicum DSM 4184.</title>
        <authorList>
            <person name="Copeland A."/>
            <person name="Lucas S."/>
            <person name="Lapidus A."/>
            <person name="Barry K."/>
            <person name="Detter J.C."/>
            <person name="Glavina del Rio T."/>
            <person name="Dalin E."/>
            <person name="Tice H."/>
            <person name="Pitluck S."/>
            <person name="Meincke L."/>
            <person name="Brettin T."/>
            <person name="Bruce D."/>
            <person name="Han C."/>
            <person name="Tapia R."/>
            <person name="Gilna P."/>
            <person name="Schmutz J."/>
            <person name="Larimer F."/>
            <person name="Land M."/>
            <person name="Hauser L."/>
            <person name="Kyrpides N."/>
            <person name="Mikhailova N."/>
            <person name="Cozen A.E."/>
            <person name="Fitz-Gibbon S.T."/>
            <person name="House C.H."/>
            <person name="Saltikov C."/>
            <person name="Lowe T."/>
            <person name="Richardson P."/>
        </authorList>
    </citation>
    <scope>NUCLEOTIDE SEQUENCE [LARGE SCALE GENOMIC DNA]</scope>
    <source>
        <strain>DSM 4184 / JCM 9189 / GEO3</strain>
    </source>
</reference>
<evidence type="ECO:0000255" key="1">
    <source>
        <dbReference type="HAMAP-Rule" id="MF_01302"/>
    </source>
</evidence>
<evidence type="ECO:0000305" key="2"/>
<name>RS8_PYRIL</name>
<accession>A1RVN1</accession>
<sequence length="130" mass="14928">MVMLDLLSNALIQIKNAEIMGKKQVVIWPVNKLIYHTLRVLQRYGYVGEIEYIDDGRGGKYVVQLLGKINDIGPIRPRYPVKYREIVQWEQKFLPARQIGILVISTSQGVMSHIEAKERKIGGVLLAYVY</sequence>
<protein>
    <recommendedName>
        <fullName evidence="1">Small ribosomal subunit protein uS8</fullName>
    </recommendedName>
    <alternativeName>
        <fullName evidence="2">30S ribosomal protein S8</fullName>
    </alternativeName>
</protein>
<gene>
    <name evidence="1" type="primary">rps8</name>
    <name type="ordered locus">Pisl_1865</name>
</gene>
<organism>
    <name type="scientific">Pyrobaculum islandicum (strain DSM 4184 / JCM 9189 / GEO3)</name>
    <dbReference type="NCBI Taxonomy" id="384616"/>
    <lineage>
        <taxon>Archaea</taxon>
        <taxon>Thermoproteota</taxon>
        <taxon>Thermoprotei</taxon>
        <taxon>Thermoproteales</taxon>
        <taxon>Thermoproteaceae</taxon>
        <taxon>Pyrobaculum</taxon>
    </lineage>
</organism>
<dbReference type="EMBL" id="CP000504">
    <property type="protein sequence ID" value="ABL89013.1"/>
    <property type="molecule type" value="Genomic_DNA"/>
</dbReference>
<dbReference type="RefSeq" id="WP_011763588.1">
    <property type="nucleotide sequence ID" value="NC_008701.1"/>
</dbReference>
<dbReference type="SMR" id="A1RVN1"/>
<dbReference type="STRING" id="384616.Pisl_1865"/>
<dbReference type="GeneID" id="4616668"/>
<dbReference type="KEGG" id="pis:Pisl_1865"/>
<dbReference type="eggNOG" id="arCOG04091">
    <property type="taxonomic scope" value="Archaea"/>
</dbReference>
<dbReference type="HOGENOM" id="CLU_098428_1_1_2"/>
<dbReference type="OrthoDB" id="5670at2157"/>
<dbReference type="Proteomes" id="UP000002595">
    <property type="component" value="Chromosome"/>
</dbReference>
<dbReference type="GO" id="GO:1990904">
    <property type="term" value="C:ribonucleoprotein complex"/>
    <property type="evidence" value="ECO:0007669"/>
    <property type="project" value="UniProtKB-KW"/>
</dbReference>
<dbReference type="GO" id="GO:0005840">
    <property type="term" value="C:ribosome"/>
    <property type="evidence" value="ECO:0007669"/>
    <property type="project" value="UniProtKB-KW"/>
</dbReference>
<dbReference type="GO" id="GO:0019843">
    <property type="term" value="F:rRNA binding"/>
    <property type="evidence" value="ECO:0007669"/>
    <property type="project" value="UniProtKB-UniRule"/>
</dbReference>
<dbReference type="GO" id="GO:0003735">
    <property type="term" value="F:structural constituent of ribosome"/>
    <property type="evidence" value="ECO:0007669"/>
    <property type="project" value="InterPro"/>
</dbReference>
<dbReference type="GO" id="GO:0006412">
    <property type="term" value="P:translation"/>
    <property type="evidence" value="ECO:0007669"/>
    <property type="project" value="UniProtKB-UniRule"/>
</dbReference>
<dbReference type="FunFam" id="3.30.1370.30:FF:000001">
    <property type="entry name" value="40S ribosomal protein S15a"/>
    <property type="match status" value="1"/>
</dbReference>
<dbReference type="Gene3D" id="3.30.1370.30">
    <property type="match status" value="1"/>
</dbReference>
<dbReference type="Gene3D" id="3.30.1490.10">
    <property type="match status" value="1"/>
</dbReference>
<dbReference type="HAMAP" id="MF_01302_A">
    <property type="entry name" value="Ribosomal_uS8_A"/>
    <property type="match status" value="1"/>
</dbReference>
<dbReference type="InterPro" id="IPR000630">
    <property type="entry name" value="Ribosomal_uS8"/>
</dbReference>
<dbReference type="InterPro" id="IPR047863">
    <property type="entry name" value="Ribosomal_uS8_CS"/>
</dbReference>
<dbReference type="InterPro" id="IPR035987">
    <property type="entry name" value="Ribosomal_uS8_sf"/>
</dbReference>
<dbReference type="NCBIfam" id="NF003115">
    <property type="entry name" value="PRK04034.1"/>
    <property type="match status" value="1"/>
</dbReference>
<dbReference type="PANTHER" id="PTHR11758">
    <property type="entry name" value="40S RIBOSOMAL PROTEIN S15A"/>
    <property type="match status" value="1"/>
</dbReference>
<dbReference type="Pfam" id="PF00410">
    <property type="entry name" value="Ribosomal_S8"/>
    <property type="match status" value="1"/>
</dbReference>
<dbReference type="SUPFAM" id="SSF56047">
    <property type="entry name" value="Ribosomal protein S8"/>
    <property type="match status" value="1"/>
</dbReference>
<dbReference type="PROSITE" id="PS00053">
    <property type="entry name" value="RIBOSOMAL_S8"/>
    <property type="match status" value="1"/>
</dbReference>